<gene>
    <name evidence="3" type="primary">mhf1</name>
    <name evidence="9" type="ORF">SPBC2D10.16</name>
</gene>
<accession>O74807</accession>
<organism>
    <name type="scientific">Schizosaccharomyces pombe (strain 972 / ATCC 24843)</name>
    <name type="common">Fission yeast</name>
    <dbReference type="NCBI Taxonomy" id="284812"/>
    <lineage>
        <taxon>Eukaryota</taxon>
        <taxon>Fungi</taxon>
        <taxon>Dikarya</taxon>
        <taxon>Ascomycota</taxon>
        <taxon>Taphrinomycotina</taxon>
        <taxon>Schizosaccharomycetes</taxon>
        <taxon>Schizosaccharomycetales</taxon>
        <taxon>Schizosaccharomycetaceae</taxon>
        <taxon>Schizosaccharomyces</taxon>
    </lineage>
</organism>
<feature type="chain" id="PRO_0000304030" description="Inner kinetochore subunit mhf1">
    <location>
        <begin position="1"/>
        <end position="110"/>
    </location>
</feature>
<protein>
    <recommendedName>
        <fullName>Inner kinetochore subunit mhf1</fullName>
    </recommendedName>
    <alternativeName>
        <fullName>CENP-S homolog</fullName>
    </alternativeName>
    <alternativeName>
        <fullName>Constitutive centromere-associated network protein mhf1</fullName>
    </alternativeName>
    <alternativeName>
        <fullName evidence="5">MHF histone-fold complex subunit 1</fullName>
    </alternativeName>
</protein>
<comment type="function">
    <text evidence="2 5">Component of a FANCM-MHF complex that promotes gene conversion at blocked replication forks, probably by reversal of the stalled fork (Probable). FANCM-MHF promotes non-crossover recombination (PubMed:22723423).</text>
</comment>
<comment type="subunit">
    <text evidence="1">The MHF histone-fold complex is a heterotetramer of 2 mhf1-mhf2 heterodimers (By similarity). Component of the inner kinetochore constitutive centromere-associated network (CCAN) (also known as central kinetochore Sim4 complex in fission yeast), which is composed of at least cnl2, cnp3, cnp20, fta1, fta2, fta3, fta4, fta6, fta7, mal2, mhf1, mhf2, mis6, mis15, mis17, sim4 and wip1 (By similarity).</text>
</comment>
<comment type="subcellular location">
    <subcellularLocation>
        <location evidence="6">Nucleus</location>
    </subcellularLocation>
</comment>
<comment type="similarity">
    <text evidence="4">Belongs to the TAF9 family. CENP-S/MHF1 subfamily.</text>
</comment>
<comment type="caution">
    <text evidence="7 8">An article showing that FANCM-MHF promotes gene conversion at blocked replication forks by fork reversal was withdrawn due to genotype mislabeling of strains. Following strain regeneration, although many phenotypes were not reproducible, the central observations of the publication were confirmed.</text>
</comment>
<evidence type="ECO:0000250" key="1">
    <source>
        <dbReference type="UniProtKB" id="Q3E835"/>
    </source>
</evidence>
<evidence type="ECO:0000269" key="2">
    <source>
    </source>
</evidence>
<evidence type="ECO:0000303" key="3">
    <source>
    </source>
</evidence>
<evidence type="ECO:0000305" key="4"/>
<evidence type="ECO:0000305" key="5">
    <source>
    </source>
</evidence>
<evidence type="ECO:0000305" key="6">
    <source>
    </source>
</evidence>
<evidence type="ECO:0000305" key="7">
    <source>
    </source>
</evidence>
<evidence type="ECO:0000305" key="8">
    <source>
    </source>
</evidence>
<evidence type="ECO:0000312" key="9">
    <source>
        <dbReference type="PomBase" id="SPBC2D10.16"/>
    </source>
</evidence>
<name>CENPS_SCHPO</name>
<sequence>MMEEERFKAEIFHVTQEVCNRTASELTESESRNVIVDELFCVGVTEMVWEQIRVLAKDIEAFAEHAGRKTVQPQDVLLCCRRNEGLYEIINNFHKESIKSKKKKKENSTT</sequence>
<dbReference type="EMBL" id="CU329671">
    <property type="protein sequence ID" value="CAA21174.2"/>
    <property type="molecule type" value="Genomic_DNA"/>
</dbReference>
<dbReference type="PIR" id="T40119">
    <property type="entry name" value="T40119"/>
</dbReference>
<dbReference type="RefSeq" id="NP_596235.2">
    <property type="nucleotide sequence ID" value="NM_001022155.3"/>
</dbReference>
<dbReference type="SMR" id="O74807"/>
<dbReference type="BioGRID" id="276971">
    <property type="interactions" value="5"/>
</dbReference>
<dbReference type="FunCoup" id="O74807">
    <property type="interactions" value="21"/>
</dbReference>
<dbReference type="STRING" id="284812.O74807"/>
<dbReference type="PaxDb" id="4896-SPBC2D10.16.1"/>
<dbReference type="EnsemblFungi" id="SPBC2D10.16.1">
    <property type="protein sequence ID" value="SPBC2D10.16.1:pep"/>
    <property type="gene ID" value="SPBC2D10.16"/>
</dbReference>
<dbReference type="GeneID" id="2540443"/>
<dbReference type="KEGG" id="spo:2540443"/>
<dbReference type="PomBase" id="SPBC2D10.16">
    <property type="gene designation" value="mhf1"/>
</dbReference>
<dbReference type="VEuPathDB" id="FungiDB:SPBC2D10.16"/>
<dbReference type="eggNOG" id="ENOG502RS0B">
    <property type="taxonomic scope" value="Eukaryota"/>
</dbReference>
<dbReference type="HOGENOM" id="CLU_100369_3_0_1"/>
<dbReference type="InParanoid" id="O74807"/>
<dbReference type="OMA" id="VTEMVWE"/>
<dbReference type="PhylomeDB" id="O74807"/>
<dbReference type="PRO" id="PR:O74807"/>
<dbReference type="Proteomes" id="UP000002485">
    <property type="component" value="Chromosome II"/>
</dbReference>
<dbReference type="GO" id="GO:0061838">
    <property type="term" value="C:CENP-T-W-S-X complex"/>
    <property type="evidence" value="ECO:0000304"/>
    <property type="project" value="PomBase"/>
</dbReference>
<dbReference type="GO" id="GO:0071821">
    <property type="term" value="C:FANCM-MHF complex"/>
    <property type="evidence" value="ECO:0000353"/>
    <property type="project" value="PomBase"/>
</dbReference>
<dbReference type="GO" id="GO:0003682">
    <property type="term" value="F:chromatin binding"/>
    <property type="evidence" value="ECO:0000318"/>
    <property type="project" value="GO_Central"/>
</dbReference>
<dbReference type="GO" id="GO:0003677">
    <property type="term" value="F:DNA binding"/>
    <property type="evidence" value="ECO:0007669"/>
    <property type="project" value="UniProtKB-KW"/>
</dbReference>
<dbReference type="GO" id="GO:0046982">
    <property type="term" value="F:protein heterodimerization activity"/>
    <property type="evidence" value="ECO:0007669"/>
    <property type="project" value="InterPro"/>
</dbReference>
<dbReference type="GO" id="GO:0045003">
    <property type="term" value="P:double-strand break repair via synthesis-dependent strand annealing"/>
    <property type="evidence" value="ECO:0000315"/>
    <property type="project" value="PomBase"/>
</dbReference>
<dbReference type="GO" id="GO:0031297">
    <property type="term" value="P:replication fork processing"/>
    <property type="evidence" value="ECO:0000318"/>
    <property type="project" value="GO_Central"/>
</dbReference>
<dbReference type="GO" id="GO:0000712">
    <property type="term" value="P:resolution of meiotic recombination intermediates"/>
    <property type="evidence" value="ECO:0000318"/>
    <property type="project" value="GO_Central"/>
</dbReference>
<dbReference type="CDD" id="cd22919">
    <property type="entry name" value="HFD_CENP-S"/>
    <property type="match status" value="1"/>
</dbReference>
<dbReference type="Gene3D" id="1.10.20.10">
    <property type="entry name" value="Histone, subunit A"/>
    <property type="match status" value="1"/>
</dbReference>
<dbReference type="InterPro" id="IPR029003">
    <property type="entry name" value="CENP-S/Mhf1"/>
</dbReference>
<dbReference type="InterPro" id="IPR009072">
    <property type="entry name" value="Histone-fold"/>
</dbReference>
<dbReference type="PANTHER" id="PTHR22980:SF0">
    <property type="entry name" value="CENTROMERE PROTEIN S"/>
    <property type="match status" value="1"/>
</dbReference>
<dbReference type="PANTHER" id="PTHR22980">
    <property type="entry name" value="CORTISTATIN"/>
    <property type="match status" value="1"/>
</dbReference>
<dbReference type="Pfam" id="PF15630">
    <property type="entry name" value="CENP-S"/>
    <property type="match status" value="1"/>
</dbReference>
<dbReference type="SUPFAM" id="SSF47113">
    <property type="entry name" value="Histone-fold"/>
    <property type="match status" value="1"/>
</dbReference>
<reference key="1">
    <citation type="journal article" date="2002" name="Nature">
        <title>The genome sequence of Schizosaccharomyces pombe.</title>
        <authorList>
            <person name="Wood V."/>
            <person name="Gwilliam R."/>
            <person name="Rajandream M.A."/>
            <person name="Lyne M.H."/>
            <person name="Lyne R."/>
            <person name="Stewart A."/>
            <person name="Sgouros J.G."/>
            <person name="Peat N."/>
            <person name="Hayles J."/>
            <person name="Baker S.G."/>
            <person name="Basham D."/>
            <person name="Bowman S."/>
            <person name="Brooks K."/>
            <person name="Brown D."/>
            <person name="Brown S."/>
            <person name="Chillingworth T."/>
            <person name="Churcher C.M."/>
            <person name="Collins M."/>
            <person name="Connor R."/>
            <person name="Cronin A."/>
            <person name="Davis P."/>
            <person name="Feltwell T."/>
            <person name="Fraser A."/>
            <person name="Gentles S."/>
            <person name="Goble A."/>
            <person name="Hamlin N."/>
            <person name="Harris D.E."/>
            <person name="Hidalgo J."/>
            <person name="Hodgson G."/>
            <person name="Holroyd S."/>
            <person name="Hornsby T."/>
            <person name="Howarth S."/>
            <person name="Huckle E.J."/>
            <person name="Hunt S."/>
            <person name="Jagels K."/>
            <person name="James K.D."/>
            <person name="Jones L."/>
            <person name="Jones M."/>
            <person name="Leather S."/>
            <person name="McDonald S."/>
            <person name="McLean J."/>
            <person name="Mooney P."/>
            <person name="Moule S."/>
            <person name="Mungall K.L."/>
            <person name="Murphy L.D."/>
            <person name="Niblett D."/>
            <person name="Odell C."/>
            <person name="Oliver K."/>
            <person name="O'Neil S."/>
            <person name="Pearson D."/>
            <person name="Quail M.A."/>
            <person name="Rabbinowitsch E."/>
            <person name="Rutherford K.M."/>
            <person name="Rutter S."/>
            <person name="Saunders D."/>
            <person name="Seeger K."/>
            <person name="Sharp S."/>
            <person name="Skelton J."/>
            <person name="Simmonds M.N."/>
            <person name="Squares R."/>
            <person name="Squares S."/>
            <person name="Stevens K."/>
            <person name="Taylor K."/>
            <person name="Taylor R.G."/>
            <person name="Tivey A."/>
            <person name="Walsh S.V."/>
            <person name="Warren T."/>
            <person name="Whitehead S."/>
            <person name="Woodward J.R."/>
            <person name="Volckaert G."/>
            <person name="Aert R."/>
            <person name="Robben J."/>
            <person name="Grymonprez B."/>
            <person name="Weltjens I."/>
            <person name="Vanstreels E."/>
            <person name="Rieger M."/>
            <person name="Schaefer M."/>
            <person name="Mueller-Auer S."/>
            <person name="Gabel C."/>
            <person name="Fuchs M."/>
            <person name="Duesterhoeft A."/>
            <person name="Fritzc C."/>
            <person name="Holzer E."/>
            <person name="Moestl D."/>
            <person name="Hilbert H."/>
            <person name="Borzym K."/>
            <person name="Langer I."/>
            <person name="Beck A."/>
            <person name="Lehrach H."/>
            <person name="Reinhardt R."/>
            <person name="Pohl T.M."/>
            <person name="Eger P."/>
            <person name="Zimmermann W."/>
            <person name="Wedler H."/>
            <person name="Wambutt R."/>
            <person name="Purnelle B."/>
            <person name="Goffeau A."/>
            <person name="Cadieu E."/>
            <person name="Dreano S."/>
            <person name="Gloux S."/>
            <person name="Lelaure V."/>
            <person name="Mottier S."/>
            <person name="Galibert F."/>
            <person name="Aves S.J."/>
            <person name="Xiang Z."/>
            <person name="Hunt C."/>
            <person name="Moore K."/>
            <person name="Hurst S.M."/>
            <person name="Lucas M."/>
            <person name="Rochet M."/>
            <person name="Gaillardin C."/>
            <person name="Tallada V.A."/>
            <person name="Garzon A."/>
            <person name="Thode G."/>
            <person name="Daga R.R."/>
            <person name="Cruzado L."/>
            <person name="Jimenez J."/>
            <person name="Sanchez M."/>
            <person name="del Rey F."/>
            <person name="Benito J."/>
            <person name="Dominguez A."/>
            <person name="Revuelta J.L."/>
            <person name="Moreno S."/>
            <person name="Armstrong J."/>
            <person name="Forsburg S.L."/>
            <person name="Cerutti L."/>
            <person name="Lowe T."/>
            <person name="McCombie W.R."/>
            <person name="Paulsen I."/>
            <person name="Potashkin J."/>
            <person name="Shpakovski G.V."/>
            <person name="Ussery D."/>
            <person name="Barrell B.G."/>
            <person name="Nurse P."/>
        </authorList>
    </citation>
    <scope>NUCLEOTIDE SEQUENCE [LARGE SCALE GENOMIC DNA]</scope>
    <source>
        <strain>972 / ATCC 24843</strain>
    </source>
</reference>
<reference key="2">
    <citation type="journal article" date="2010" name="Mol. Cell">
        <title>A histone-fold complex and FANCM form a conserved DNA-remodeling complex to maintain genome stability.</title>
        <authorList>
            <person name="Yan Z."/>
            <person name="Delannoy M."/>
            <person name="Ling C."/>
            <person name="Daee D."/>
            <person name="Osman F."/>
            <person name="Muniandy P.A."/>
            <person name="Shen X."/>
            <person name="Oostra A.B."/>
            <person name="Du H."/>
            <person name="Steltenpool J."/>
            <person name="Lin T."/>
            <person name="Schuster B."/>
            <person name="Decaillet C."/>
            <person name="Stasiak A."/>
            <person name="Stasiak A.Z."/>
            <person name="Stone S."/>
            <person name="Hoatlin M.E."/>
            <person name="Schindler D."/>
            <person name="Woodcock C.L."/>
            <person name="Joenje H."/>
            <person name="Sen R."/>
            <person name="de Winter J.P."/>
            <person name="Li L."/>
            <person name="Seidman M.M."/>
            <person name="Whitby M.C."/>
            <person name="Myung K."/>
            <person name="Constantinousend A."/>
            <person name="Wang W."/>
        </authorList>
    </citation>
    <scope>FUNCTION</scope>
</reference>
<reference key="3">
    <citation type="journal article" date="2012" name="Science">
        <title>The fission yeast FANCM ortholog directs non-crossover recombination during meiosis.</title>
        <authorList>
            <person name="Lorenz A."/>
            <person name="Osman F."/>
            <person name="Sun W."/>
            <person name="Nandi S."/>
            <person name="Steinacher R."/>
            <person name="Whitby M.C."/>
        </authorList>
    </citation>
    <scope>FUNCTION</scope>
</reference>
<reference key="4">
    <citation type="journal article" date="2013" name="Open Biol.">
        <title>MHF1-2/CENP-S-X performs distinct roles in centromere metabolism and genetic recombination.</title>
        <authorList>
            <person name="Bhattacharjee S."/>
            <person name="Osman F."/>
            <person name="Feeney L."/>
            <person name="Lorenz A."/>
            <person name="Bryer C."/>
            <person name="Whitby M.C."/>
        </authorList>
    </citation>
    <scope>RETRACTED PAPER</scope>
</reference>
<reference key="5">
    <citation type="journal article" date="2018" name="Open Biol.">
        <authorList>
            <person name="Bhattacharjee S."/>
            <person name="Osman F."/>
            <person name="Feeney L."/>
            <person name="Lorenz A."/>
            <person name="Bryer C."/>
            <person name="Whitby M.C."/>
        </authorList>
    </citation>
    <scope>RETRACTION NOTICE OF PUBMED:24026537</scope>
</reference>
<keyword id="KW-0227">DNA damage</keyword>
<keyword id="KW-0233">DNA recombination</keyword>
<keyword id="KW-0234">DNA repair</keyword>
<keyword id="KW-0238">DNA-binding</keyword>
<keyword id="KW-0469">Meiosis</keyword>
<keyword id="KW-0539">Nucleus</keyword>
<keyword id="KW-1185">Reference proteome</keyword>
<proteinExistence type="inferred from homology"/>